<proteinExistence type="inferred from homology"/>
<reference key="1">
    <citation type="journal article" date="2005" name="Nat. Biotechnol.">
        <title>Complete genome sequence of the acetic acid bacterium Gluconobacter oxydans.</title>
        <authorList>
            <person name="Prust C."/>
            <person name="Hoffmeister M."/>
            <person name="Liesegang H."/>
            <person name="Wiezer A."/>
            <person name="Fricke W.F."/>
            <person name="Ehrenreich A."/>
            <person name="Gottschalk G."/>
            <person name="Deppenmeier U."/>
        </authorList>
    </citation>
    <scope>NUCLEOTIDE SEQUENCE [LARGE SCALE GENOMIC DNA]</scope>
    <source>
        <strain>621H</strain>
    </source>
</reference>
<sequence>MRIAALLLAAGRGRRFDASSQSGENSSKQFRMLRGKPVIRRAAEALLPHVDVLLPVGDDPLLADSLEGLDILPPVSGGAERHDSVRNGLEALAKLPEPPDLVLVHDGARPCVPAEVVQNVINALKTHEGVIPAVAVIDTIKKAKDGIIVDTVPRDGLWRAQTPQGFRFGTLLELHRTHRDARTDDAALLEQAGHPVAIVEGSEDNIKLTVAEDLMRLEGVIDRNLLPRVGLGYDVHAFEEGRKLILCGIEVPHTKGLAGHSDADVGIHTLCDAIYGALAEGDIGRHFPPSDNKWKDMDSARFLVHAGERIRERGGFLVNADVTLICERPKIGPHAEAMRNRLADLLKVSVSRISVKATTSERLGFTGREEGIAATATVSIMVPDNGEA</sequence>
<evidence type="ECO:0000255" key="1">
    <source>
        <dbReference type="HAMAP-Rule" id="MF_01520"/>
    </source>
</evidence>
<evidence type="ECO:0000305" key="2"/>
<feature type="chain" id="PRO_0000075667" description="Bifunctional enzyme IspD/IspF">
    <location>
        <begin position="1"/>
        <end position="388"/>
    </location>
</feature>
<feature type="region of interest" description="2-C-methyl-D-erythritol 4-phosphate cytidylyltransferase" evidence="1">
    <location>
        <begin position="1"/>
        <end position="228"/>
    </location>
</feature>
<feature type="region of interest" description="2-C-methyl-D-erythritol 2,4-cyclodiphosphate synthase" evidence="1">
    <location>
        <begin position="228"/>
        <end position="388"/>
    </location>
</feature>
<feature type="binding site" evidence="1">
    <location>
        <begin position="234"/>
        <end position="236"/>
    </location>
    <ligand>
        <name>4-CDP-2-C-methyl-D-erythritol 2-phosphate</name>
        <dbReference type="ChEBI" id="CHEBI:57919"/>
    </ligand>
</feature>
<feature type="binding site" evidence="1">
    <location>
        <position position="234"/>
    </location>
    <ligand>
        <name>a divalent metal cation</name>
        <dbReference type="ChEBI" id="CHEBI:60240"/>
    </ligand>
</feature>
<feature type="binding site" evidence="1">
    <location>
        <position position="236"/>
    </location>
    <ligand>
        <name>a divalent metal cation</name>
        <dbReference type="ChEBI" id="CHEBI:60240"/>
    </ligand>
</feature>
<feature type="binding site" evidence="1">
    <location>
        <begin position="260"/>
        <end position="261"/>
    </location>
    <ligand>
        <name>4-CDP-2-C-methyl-D-erythritol 2-phosphate</name>
        <dbReference type="ChEBI" id="CHEBI:57919"/>
    </ligand>
</feature>
<feature type="binding site" evidence="1">
    <location>
        <position position="268"/>
    </location>
    <ligand>
        <name>a divalent metal cation</name>
        <dbReference type="ChEBI" id="CHEBI:60240"/>
    </ligand>
</feature>
<feature type="binding site" evidence="1">
    <location>
        <begin position="282"/>
        <end position="284"/>
    </location>
    <ligand>
        <name>4-CDP-2-C-methyl-D-erythritol 2-phosphate</name>
        <dbReference type="ChEBI" id="CHEBI:57919"/>
    </ligand>
</feature>
<feature type="binding site" evidence="1">
    <location>
        <begin position="358"/>
        <end position="361"/>
    </location>
    <ligand>
        <name>4-CDP-2-C-methyl-D-erythritol 2-phosphate</name>
        <dbReference type="ChEBI" id="CHEBI:57919"/>
    </ligand>
</feature>
<feature type="binding site" evidence="1">
    <location>
        <position position="365"/>
    </location>
    <ligand>
        <name>4-CDP-2-C-methyl-D-erythritol 2-phosphate</name>
        <dbReference type="ChEBI" id="CHEBI:57919"/>
    </ligand>
</feature>
<feature type="binding site" evidence="1">
    <location>
        <position position="368"/>
    </location>
    <ligand>
        <name>4-CDP-2-C-methyl-D-erythritol 2-phosphate</name>
        <dbReference type="ChEBI" id="CHEBI:57919"/>
    </ligand>
</feature>
<feature type="site" description="Transition state stabilizer" evidence="1">
    <location>
        <position position="15"/>
    </location>
</feature>
<feature type="site" description="Transition state stabilizer" evidence="1">
    <location>
        <position position="28"/>
    </location>
</feature>
<feature type="site" description="Positions MEP for the nucleophilic attack" evidence="1">
    <location>
        <position position="154"/>
    </location>
</feature>
<feature type="site" description="Positions MEP for the nucleophilic attack" evidence="1">
    <location>
        <position position="207"/>
    </location>
</feature>
<feature type="site" description="Transition state stabilizer" evidence="1">
    <location>
        <position position="260"/>
    </location>
</feature>
<feature type="site" description="Transition state stabilizer" evidence="1">
    <location>
        <position position="359"/>
    </location>
</feature>
<comment type="function">
    <text evidence="1">Bifunctional enzyme that catalyzes the formation of 4-diphosphocytidyl-2-C-methyl-D-erythritol from CTP and 2-C-methyl-D-erythritol 4-phosphate (MEP) (IspD), and catalyzes the conversion of 4-diphosphocytidyl-2-C-methyl-D-erythritol 2-phosphate (CDP-ME2P) to 2-C-methyl-D-erythritol 2,4-cyclodiphosphate (ME-CPP) with a corresponding release of cytidine 5-monophosphate (CMP) (IspF).</text>
</comment>
<comment type="catalytic activity">
    <reaction evidence="1">
        <text>2-C-methyl-D-erythritol 4-phosphate + CTP + H(+) = 4-CDP-2-C-methyl-D-erythritol + diphosphate</text>
        <dbReference type="Rhea" id="RHEA:13429"/>
        <dbReference type="ChEBI" id="CHEBI:15378"/>
        <dbReference type="ChEBI" id="CHEBI:33019"/>
        <dbReference type="ChEBI" id="CHEBI:37563"/>
        <dbReference type="ChEBI" id="CHEBI:57823"/>
        <dbReference type="ChEBI" id="CHEBI:58262"/>
        <dbReference type="EC" id="2.7.7.60"/>
    </reaction>
</comment>
<comment type="catalytic activity">
    <reaction evidence="1">
        <text>4-CDP-2-C-methyl-D-erythritol 2-phosphate = 2-C-methyl-D-erythritol 2,4-cyclic diphosphate + CMP</text>
        <dbReference type="Rhea" id="RHEA:23864"/>
        <dbReference type="ChEBI" id="CHEBI:57919"/>
        <dbReference type="ChEBI" id="CHEBI:58483"/>
        <dbReference type="ChEBI" id="CHEBI:60377"/>
        <dbReference type="EC" id="4.6.1.12"/>
    </reaction>
</comment>
<comment type="cofactor">
    <cofactor evidence="1">
        <name>a divalent metal cation</name>
        <dbReference type="ChEBI" id="CHEBI:60240"/>
    </cofactor>
</comment>
<comment type="pathway">
    <text evidence="1">Isoprenoid biosynthesis; isopentenyl diphosphate biosynthesis via DXP pathway; isopentenyl diphosphate from 1-deoxy-D-xylulose 5-phosphate: step 2/6.</text>
</comment>
<comment type="pathway">
    <text evidence="1">Isoprenoid biosynthesis; isopentenyl diphosphate biosynthesis via DXP pathway; isopentenyl diphosphate from 1-deoxy-D-xylulose 5-phosphate: step 4/6.</text>
</comment>
<comment type="similarity">
    <text evidence="1">In the N-terminal section; belongs to the IspD/TarI cytidylyltransferase family. IspD subfamily.</text>
</comment>
<comment type="similarity">
    <text evidence="1">In the C-terminal section; belongs to the IspF family.</text>
</comment>
<comment type="sequence caution" evidence="2">
    <conflict type="erroneous initiation">
        <sequence resource="EMBL-CDS" id="AAW61410"/>
    </conflict>
    <text>Truncated N-terminus.</text>
</comment>
<accession>Q5FQD6</accession>
<dbReference type="EC" id="2.7.7.60" evidence="1"/>
<dbReference type="EC" id="4.6.1.12" evidence="1"/>
<dbReference type="EMBL" id="CP000009">
    <property type="protein sequence ID" value="AAW61410.1"/>
    <property type="status" value="ALT_INIT"/>
    <property type="molecule type" value="Genomic_DNA"/>
</dbReference>
<dbReference type="RefSeq" id="WP_024716941.1">
    <property type="nucleotide sequence ID" value="NC_006677.1"/>
</dbReference>
<dbReference type="SMR" id="Q5FQD6"/>
<dbReference type="STRING" id="290633.GOX1669"/>
<dbReference type="KEGG" id="gox:GOX1669"/>
<dbReference type="eggNOG" id="COG0245">
    <property type="taxonomic scope" value="Bacteria"/>
</dbReference>
<dbReference type="eggNOG" id="COG1211">
    <property type="taxonomic scope" value="Bacteria"/>
</dbReference>
<dbReference type="HOGENOM" id="CLU_042800_2_5_5"/>
<dbReference type="UniPathway" id="UPA00056">
    <property type="reaction ID" value="UER00093"/>
</dbReference>
<dbReference type="UniPathway" id="UPA00056">
    <property type="reaction ID" value="UER00095"/>
</dbReference>
<dbReference type="Proteomes" id="UP000006375">
    <property type="component" value="Chromosome"/>
</dbReference>
<dbReference type="GO" id="GO:0008685">
    <property type="term" value="F:2-C-methyl-D-erythritol 2,4-cyclodiphosphate synthase activity"/>
    <property type="evidence" value="ECO:0007669"/>
    <property type="project" value="UniProtKB-UniRule"/>
</dbReference>
<dbReference type="GO" id="GO:0050518">
    <property type="term" value="F:2-C-methyl-D-erythritol 4-phosphate cytidylyltransferase activity"/>
    <property type="evidence" value="ECO:0007669"/>
    <property type="project" value="UniProtKB-UniRule"/>
</dbReference>
<dbReference type="GO" id="GO:0046872">
    <property type="term" value="F:metal ion binding"/>
    <property type="evidence" value="ECO:0007669"/>
    <property type="project" value="UniProtKB-KW"/>
</dbReference>
<dbReference type="GO" id="GO:0019288">
    <property type="term" value="P:isopentenyl diphosphate biosynthetic process, methylerythritol 4-phosphate pathway"/>
    <property type="evidence" value="ECO:0007669"/>
    <property type="project" value="UniProtKB-UniRule"/>
</dbReference>
<dbReference type="GO" id="GO:0016114">
    <property type="term" value="P:terpenoid biosynthetic process"/>
    <property type="evidence" value="ECO:0007669"/>
    <property type="project" value="InterPro"/>
</dbReference>
<dbReference type="CDD" id="cd02516">
    <property type="entry name" value="CDP-ME_synthetase"/>
    <property type="match status" value="1"/>
</dbReference>
<dbReference type="CDD" id="cd00554">
    <property type="entry name" value="MECDP_synthase"/>
    <property type="match status" value="1"/>
</dbReference>
<dbReference type="FunFam" id="3.30.1330.50:FF:000003">
    <property type="entry name" value="2-C-methyl-D-erythritol 2,4-cyclodiphosphate synthase"/>
    <property type="match status" value="1"/>
</dbReference>
<dbReference type="Gene3D" id="3.30.1330.50">
    <property type="entry name" value="2-C-methyl-D-erythritol 2,4-cyclodiphosphate synthase"/>
    <property type="match status" value="1"/>
</dbReference>
<dbReference type="Gene3D" id="3.90.550.10">
    <property type="entry name" value="Spore Coat Polysaccharide Biosynthesis Protein SpsA, Chain A"/>
    <property type="match status" value="1"/>
</dbReference>
<dbReference type="HAMAP" id="MF_00108">
    <property type="entry name" value="IspD"/>
    <property type="match status" value="1"/>
</dbReference>
<dbReference type="HAMAP" id="MF_01520">
    <property type="entry name" value="IspDF"/>
    <property type="match status" value="1"/>
</dbReference>
<dbReference type="HAMAP" id="MF_00107">
    <property type="entry name" value="IspF"/>
    <property type="match status" value="1"/>
</dbReference>
<dbReference type="InterPro" id="IPR001228">
    <property type="entry name" value="IspD"/>
</dbReference>
<dbReference type="InterPro" id="IPR026596">
    <property type="entry name" value="IspD/F"/>
</dbReference>
<dbReference type="InterPro" id="IPR034683">
    <property type="entry name" value="IspD/TarI"/>
</dbReference>
<dbReference type="InterPro" id="IPR018294">
    <property type="entry name" value="ISPD_synthase_CS"/>
</dbReference>
<dbReference type="InterPro" id="IPR003526">
    <property type="entry name" value="MECDP_synthase"/>
</dbReference>
<dbReference type="InterPro" id="IPR020555">
    <property type="entry name" value="MECDP_synthase_CS"/>
</dbReference>
<dbReference type="InterPro" id="IPR036571">
    <property type="entry name" value="MECDP_synthase_sf"/>
</dbReference>
<dbReference type="InterPro" id="IPR029044">
    <property type="entry name" value="Nucleotide-diphossugar_trans"/>
</dbReference>
<dbReference type="NCBIfam" id="TIGR00453">
    <property type="entry name" value="ispD"/>
    <property type="match status" value="1"/>
</dbReference>
<dbReference type="NCBIfam" id="TIGR00151">
    <property type="entry name" value="ispF"/>
    <property type="match status" value="1"/>
</dbReference>
<dbReference type="NCBIfam" id="NF006899">
    <property type="entry name" value="PRK09382.1"/>
    <property type="match status" value="1"/>
</dbReference>
<dbReference type="PANTHER" id="PTHR43181">
    <property type="entry name" value="2-C-METHYL-D-ERYTHRITOL 2,4-CYCLODIPHOSPHATE SYNTHASE, CHLOROPLASTIC"/>
    <property type="match status" value="1"/>
</dbReference>
<dbReference type="PANTHER" id="PTHR43181:SF1">
    <property type="entry name" value="2-C-METHYL-D-ERYTHRITOL 2,4-CYCLODIPHOSPHATE SYNTHASE, CHLOROPLASTIC"/>
    <property type="match status" value="1"/>
</dbReference>
<dbReference type="Pfam" id="PF01128">
    <property type="entry name" value="IspD"/>
    <property type="match status" value="1"/>
</dbReference>
<dbReference type="Pfam" id="PF02542">
    <property type="entry name" value="YgbB"/>
    <property type="match status" value="1"/>
</dbReference>
<dbReference type="SUPFAM" id="SSF69765">
    <property type="entry name" value="IpsF-like"/>
    <property type="match status" value="1"/>
</dbReference>
<dbReference type="SUPFAM" id="SSF53448">
    <property type="entry name" value="Nucleotide-diphospho-sugar transferases"/>
    <property type="match status" value="1"/>
</dbReference>
<dbReference type="PROSITE" id="PS01295">
    <property type="entry name" value="ISPD"/>
    <property type="match status" value="1"/>
</dbReference>
<dbReference type="PROSITE" id="PS01350">
    <property type="entry name" value="ISPF"/>
    <property type="match status" value="1"/>
</dbReference>
<keyword id="KW-0414">Isoprene biosynthesis</keyword>
<keyword id="KW-0456">Lyase</keyword>
<keyword id="KW-0479">Metal-binding</keyword>
<keyword id="KW-0511">Multifunctional enzyme</keyword>
<keyword id="KW-0548">Nucleotidyltransferase</keyword>
<keyword id="KW-1185">Reference proteome</keyword>
<keyword id="KW-0808">Transferase</keyword>
<organism>
    <name type="scientific">Gluconobacter oxydans (strain 621H)</name>
    <name type="common">Gluconobacter suboxydans</name>
    <dbReference type="NCBI Taxonomy" id="290633"/>
    <lineage>
        <taxon>Bacteria</taxon>
        <taxon>Pseudomonadati</taxon>
        <taxon>Pseudomonadota</taxon>
        <taxon>Alphaproteobacteria</taxon>
        <taxon>Acetobacterales</taxon>
        <taxon>Acetobacteraceae</taxon>
        <taxon>Gluconobacter</taxon>
    </lineage>
</organism>
<gene>
    <name evidence="1" type="primary">ispDF</name>
    <name type="ordered locus">GOX1669</name>
</gene>
<protein>
    <recommendedName>
        <fullName evidence="1">Bifunctional enzyme IspD/IspF</fullName>
    </recommendedName>
    <domain>
        <recommendedName>
            <fullName evidence="1">2-C-methyl-D-erythritol 4-phosphate cytidylyltransferase</fullName>
            <ecNumber evidence="1">2.7.7.60</ecNumber>
        </recommendedName>
        <alternativeName>
            <fullName evidence="1">4-diphosphocytidyl-2C-methyl-D-erythritol synthase</fullName>
        </alternativeName>
        <alternativeName>
            <fullName evidence="1">MEP cytidylyltransferase</fullName>
            <shortName evidence="1">MCT</shortName>
        </alternativeName>
    </domain>
    <domain>
        <recommendedName>
            <fullName evidence="1">2-C-methyl-D-erythritol 2,4-cyclodiphosphate synthase</fullName>
            <shortName evidence="1">MECDP-synthase</shortName>
            <shortName evidence="1">MECPP-synthase</shortName>
            <shortName evidence="1">MECPS</shortName>
            <ecNumber evidence="1">4.6.1.12</ecNumber>
        </recommendedName>
    </domain>
</protein>
<name>ISPDF_GLUOX</name>